<evidence type="ECO:0000250" key="1"/>
<evidence type="ECO:0000255" key="2"/>
<evidence type="ECO:0000305" key="3"/>
<keyword id="KW-0325">Glycoprotein</keyword>
<keyword id="KW-0333">Golgi apparatus</keyword>
<keyword id="KW-0472">Membrane</keyword>
<keyword id="KW-1185">Reference proteome</keyword>
<keyword id="KW-0812">Transmembrane</keyword>
<keyword id="KW-1133">Transmembrane helix</keyword>
<gene>
    <name type="primary">TVP18</name>
    <name type="ORF">LELG_00365</name>
</gene>
<sequence length="173" mass="19118">MALGETITQNVFGGLSNDFKKKNFSLYGQWISIFTIFLCIALGIANIFHFNLVIIFSVICIVQGLIVIFVEVPFLLRICPLTDTFTNFIRKFDGNLPRCGFYLLNAVIQWLSCTLQATSLIVVAIFFTLASACYALAYAKNQEYLKSSIDVTGTGQGGALEAQVGEHVVRNVL</sequence>
<organism>
    <name type="scientific">Lodderomyces elongisporus (strain ATCC 11503 / CBS 2605 / JCM 1781 / NBRC 1676 / NRRL YB-4239)</name>
    <name type="common">Yeast</name>
    <name type="synonym">Saccharomyces elongisporus</name>
    <dbReference type="NCBI Taxonomy" id="379508"/>
    <lineage>
        <taxon>Eukaryota</taxon>
        <taxon>Fungi</taxon>
        <taxon>Dikarya</taxon>
        <taxon>Ascomycota</taxon>
        <taxon>Saccharomycotina</taxon>
        <taxon>Pichiomycetes</taxon>
        <taxon>Debaryomycetaceae</taxon>
        <taxon>Candida/Lodderomyces clade</taxon>
        <taxon>Lodderomyces</taxon>
    </lineage>
</organism>
<reference key="1">
    <citation type="journal article" date="2009" name="Nature">
        <title>Evolution of pathogenicity and sexual reproduction in eight Candida genomes.</title>
        <authorList>
            <person name="Butler G."/>
            <person name="Rasmussen M.D."/>
            <person name="Lin M.F."/>
            <person name="Santos M.A.S."/>
            <person name="Sakthikumar S."/>
            <person name="Munro C.A."/>
            <person name="Rheinbay E."/>
            <person name="Grabherr M."/>
            <person name="Forche A."/>
            <person name="Reedy J.L."/>
            <person name="Agrafioti I."/>
            <person name="Arnaud M.B."/>
            <person name="Bates S."/>
            <person name="Brown A.J.P."/>
            <person name="Brunke S."/>
            <person name="Costanzo M.C."/>
            <person name="Fitzpatrick D.A."/>
            <person name="de Groot P.W.J."/>
            <person name="Harris D."/>
            <person name="Hoyer L.L."/>
            <person name="Hube B."/>
            <person name="Klis F.M."/>
            <person name="Kodira C."/>
            <person name="Lennard N."/>
            <person name="Logue M.E."/>
            <person name="Martin R."/>
            <person name="Neiman A.M."/>
            <person name="Nikolaou E."/>
            <person name="Quail M.A."/>
            <person name="Quinn J."/>
            <person name="Santos M.C."/>
            <person name="Schmitzberger F.F."/>
            <person name="Sherlock G."/>
            <person name="Shah P."/>
            <person name="Silverstein K.A.T."/>
            <person name="Skrzypek M.S."/>
            <person name="Soll D."/>
            <person name="Staggs R."/>
            <person name="Stansfield I."/>
            <person name="Stumpf M.P.H."/>
            <person name="Sudbery P.E."/>
            <person name="Srikantha T."/>
            <person name="Zeng Q."/>
            <person name="Berman J."/>
            <person name="Berriman M."/>
            <person name="Heitman J."/>
            <person name="Gow N.A.R."/>
            <person name="Lorenz M.C."/>
            <person name="Birren B.W."/>
            <person name="Kellis M."/>
            <person name="Cuomo C.A."/>
        </authorList>
    </citation>
    <scope>NUCLEOTIDE SEQUENCE [LARGE SCALE GENOMIC DNA]</scope>
    <source>
        <strain>ATCC 11503 / BCRC 21390 / CBS 2605 / JCM 1781 / NBRC 1676 / NRRL YB-4239</strain>
    </source>
</reference>
<feature type="chain" id="PRO_0000343021" description="Golgi apparatus membrane protein TVP18">
    <location>
        <begin position="1"/>
        <end position="173"/>
    </location>
</feature>
<feature type="transmembrane region" description="Helical" evidence="2">
    <location>
        <begin position="28"/>
        <end position="48"/>
    </location>
</feature>
<feature type="transmembrane region" description="Helical" evidence="2">
    <location>
        <begin position="50"/>
        <end position="70"/>
    </location>
</feature>
<feature type="transmembrane region" description="Helical" evidence="2">
    <location>
        <begin position="96"/>
        <end position="112"/>
    </location>
</feature>
<feature type="transmembrane region" description="Helical" evidence="2">
    <location>
        <begin position="119"/>
        <end position="139"/>
    </location>
</feature>
<feature type="glycosylation site" description="N-linked (GlcNAc...) asparagine" evidence="2">
    <location>
        <position position="23"/>
    </location>
</feature>
<protein>
    <recommendedName>
        <fullName>Golgi apparatus membrane protein TVP18</fullName>
    </recommendedName>
</protein>
<name>TVP18_LODEL</name>
<accession>A5DSM9</accession>
<comment type="function">
    <text evidence="1">Golgi membrane protein involved in vesicular trafficking.</text>
</comment>
<comment type="subcellular location">
    <subcellularLocation>
        <location evidence="1">Golgi apparatus membrane</location>
        <topology evidence="1">Multi-pass membrane protein</topology>
    </subcellularLocation>
</comment>
<comment type="similarity">
    <text evidence="3">Belongs to the TVP18 family.</text>
</comment>
<proteinExistence type="inferred from homology"/>
<dbReference type="EMBL" id="CH981524">
    <property type="protein sequence ID" value="EDK42187.1"/>
    <property type="molecule type" value="Genomic_DNA"/>
</dbReference>
<dbReference type="RefSeq" id="XP_001527845.1">
    <property type="nucleotide sequence ID" value="XM_001527795.1"/>
</dbReference>
<dbReference type="SMR" id="A5DSM9"/>
<dbReference type="FunCoup" id="A5DSM9">
    <property type="interactions" value="40"/>
</dbReference>
<dbReference type="STRING" id="379508.A5DSM9"/>
<dbReference type="GlyCosmos" id="A5DSM9">
    <property type="glycosylation" value="1 site, No reported glycans"/>
</dbReference>
<dbReference type="GeneID" id="5235796"/>
<dbReference type="KEGG" id="lel:PVL30_000357"/>
<dbReference type="eggNOG" id="ENOG502S3AC">
    <property type="taxonomic scope" value="Eukaryota"/>
</dbReference>
<dbReference type="HOGENOM" id="CLU_118698_1_0_1"/>
<dbReference type="InParanoid" id="A5DSM9"/>
<dbReference type="OMA" id="IYAQWLG"/>
<dbReference type="OrthoDB" id="5591789at2759"/>
<dbReference type="Proteomes" id="UP000001996">
    <property type="component" value="Unassembled WGS sequence"/>
</dbReference>
<dbReference type="GO" id="GO:0000139">
    <property type="term" value="C:Golgi membrane"/>
    <property type="evidence" value="ECO:0007669"/>
    <property type="project" value="UniProtKB-SubCell"/>
</dbReference>
<dbReference type="GO" id="GO:0016192">
    <property type="term" value="P:vesicle-mediated transport"/>
    <property type="evidence" value="ECO:0007669"/>
    <property type="project" value="TreeGrafter"/>
</dbReference>
<dbReference type="InterPro" id="IPR019365">
    <property type="entry name" value="TVP18/Ca-channel_flower"/>
</dbReference>
<dbReference type="PANTHER" id="PTHR13314">
    <property type="entry name" value="CALCIUM CHANNEL FLOWER HOMOLOG"/>
    <property type="match status" value="1"/>
</dbReference>
<dbReference type="PANTHER" id="PTHR13314:SF2">
    <property type="entry name" value="CALCIUM CHANNEL FLOWER HOMOLOG"/>
    <property type="match status" value="1"/>
</dbReference>
<dbReference type="Pfam" id="PF10233">
    <property type="entry name" value="Cg6151-P"/>
    <property type="match status" value="1"/>
</dbReference>
<dbReference type="SMART" id="SM01077">
    <property type="entry name" value="Cg6151-P"/>
    <property type="match status" value="1"/>
</dbReference>